<reference evidence="12" key="1">
    <citation type="journal article" date="1996" name="DNA Res.">
        <title>Prediction of the coding sequences of unidentified human genes. V. The coding sequences of 40 new genes (KIAA0161-KIAA0200) deduced by analysis of cDNA clones from human cell line KG-1.</title>
        <authorList>
            <person name="Nagase T."/>
            <person name="Seki N."/>
            <person name="Ishikawa K."/>
            <person name="Tanaka A."/>
            <person name="Nomura N."/>
        </authorList>
    </citation>
    <scope>NUCLEOTIDE SEQUENCE [LARGE SCALE MRNA]</scope>
    <source>
        <tissue evidence="9">Bone marrow</tissue>
    </source>
</reference>
<reference evidence="10 11" key="2">
    <citation type="journal article" date="2000" name="Nat. Genet.">
        <title>MAML1, a human homologue of Drosophila mastermind, is a transcriptional co-activator for NOTCH receptors.</title>
        <authorList>
            <person name="Wu L."/>
            <person name="Aster J.C."/>
            <person name="Blacklow S.C."/>
            <person name="Lake R."/>
            <person name="Artavanis-Tsakonas S."/>
            <person name="Griffin J.D."/>
        </authorList>
    </citation>
    <scope>NUCLEOTIDE SEQUENCE [MRNA] OF 124-1016</scope>
    <scope>FUNCTION</scope>
    <scope>SUBCELLULAR LOCATION</scope>
    <scope>TISSUE SPECIFICITY</scope>
    <scope>INTERACTION WITH NOTCH1; NOTCH2; NOTCH3 AND NOTCH4</scope>
    <scope>VARIANT ASN-1007</scope>
    <source>
        <tissue>Cervix carcinoma</tissue>
    </source>
</reference>
<reference key="3">
    <citation type="journal article" date="2001" name="Mol. Cell. Biol.">
        <title>A human protein with sequence similarity to Drosophila mastermind coordinates the nuclear form of Notch and a CSL protein to build a transcriptional activator complex on target promoters.</title>
        <authorList>
            <person name="Kitagawa M."/>
            <person name="Oyama T."/>
            <person name="Kawashima T."/>
            <person name="Yedvobnick B."/>
            <person name="Kumar A."/>
            <person name="Matsuno K."/>
            <person name="Harigaya K."/>
        </authorList>
    </citation>
    <scope>FUNCTION</scope>
    <scope>INTERACTION WITH NOTCH1</scope>
</reference>
<reference key="4">
    <citation type="journal article" date="2002" name="Genes Dev.">
        <title>Mastermind mediates chromatin-specific transcription and turnover of the Notch enhancer complex.</title>
        <authorList>
            <person name="Fryer C.J."/>
            <person name="Lamar E."/>
            <person name="Turbachova I."/>
            <person name="Kintner C."/>
            <person name="Jones K.A."/>
        </authorList>
    </citation>
    <scope>FUNCTION</scope>
    <scope>INTERACTION WITH CREBBP</scope>
</reference>
<reference key="5">
    <citation type="journal article" date="2004" name="Mol. Cell">
        <title>Mastermind recruits CycC:CDK8 to phosphorylate the Notch ICD and coordinate activation with turnover.</title>
        <authorList>
            <person name="Fryer C.J."/>
            <person name="White J.B."/>
            <person name="Jones K.A."/>
        </authorList>
    </citation>
    <scope>FUNCTION</scope>
    <scope>INTERACTION WITH CDK8</scope>
</reference>
<reference key="6">
    <citation type="journal article" date="2007" name="J. Biol. Chem.">
        <title>The notch regulator MAML1 interacts with p53 and functions as a coactivator.</title>
        <authorList>
            <person name="Zhao Y."/>
            <person name="Katzman R.B."/>
            <person name="Delmolino L.M."/>
            <person name="Bhat I."/>
            <person name="Zhang Y."/>
            <person name="Gurumurthy C.B."/>
            <person name="Germaniuk-Kurowska A."/>
            <person name="Reddi H.V."/>
            <person name="Solomon A."/>
            <person name="Zeng M.S."/>
            <person name="Kung A."/>
            <person name="Ma H."/>
            <person name="Gao Q."/>
            <person name="Dimri G."/>
            <person name="Stanculescu A."/>
            <person name="Miele L."/>
            <person name="Wu L."/>
            <person name="Griffin J.D."/>
            <person name="Wazer D.E."/>
            <person name="Band H."/>
            <person name="Band V."/>
        </authorList>
    </citation>
    <scope>FUNCTION</scope>
    <scope>INTERACTION WITH TP53</scope>
</reference>
<reference key="7">
    <citation type="journal article" date="2009" name="Sci. Signal.">
        <title>Quantitative phosphoproteomic analysis of T cell receptor signaling reveals system-wide modulation of protein-protein interactions.</title>
        <authorList>
            <person name="Mayya V."/>
            <person name="Lundgren D.H."/>
            <person name="Hwang S.-I."/>
            <person name="Rezaul K."/>
            <person name="Wu L."/>
            <person name="Eng J.K."/>
            <person name="Rodionov V."/>
            <person name="Han D.K."/>
        </authorList>
    </citation>
    <scope>PHOSPHORYLATION [LARGE SCALE ANALYSIS] AT SER-314 AND SER-360</scope>
    <scope>IDENTIFICATION BY MASS SPECTROMETRY [LARGE SCALE ANALYSIS]</scope>
    <source>
        <tissue>Leukemic T-cell</tissue>
    </source>
</reference>
<reference key="8">
    <citation type="journal article" date="2009" name="Science">
        <title>Lysine acetylation targets protein complexes and co-regulates major cellular functions.</title>
        <authorList>
            <person name="Choudhary C."/>
            <person name="Kumar C."/>
            <person name="Gnad F."/>
            <person name="Nielsen M.L."/>
            <person name="Rehman M."/>
            <person name="Walther T.C."/>
            <person name="Olsen J.V."/>
            <person name="Mann M."/>
        </authorList>
    </citation>
    <scope>ACETYLATION [LARGE SCALE ANALYSIS] AT LYS-822</scope>
    <scope>IDENTIFICATION BY MASS SPECTROMETRY [LARGE SCALE ANALYSIS]</scope>
</reference>
<reference key="9">
    <citation type="journal article" date="2013" name="J. Proteome Res.">
        <title>Toward a comprehensive characterization of a human cancer cell phosphoproteome.</title>
        <authorList>
            <person name="Zhou H."/>
            <person name="Di Palma S."/>
            <person name="Preisinger C."/>
            <person name="Peng M."/>
            <person name="Polat A.N."/>
            <person name="Heck A.J."/>
            <person name="Mohammed S."/>
        </authorList>
    </citation>
    <scope>PHOSPHORYLATION [LARGE SCALE ANALYSIS] AT SER-45; SER-314 AND SER-360</scope>
    <scope>IDENTIFICATION BY MASS SPECTROMETRY [LARGE SCALE ANALYSIS]</scope>
    <source>
        <tissue>Cervix carcinoma</tissue>
        <tissue>Erythroleukemia</tissue>
    </source>
</reference>
<reference key="10">
    <citation type="journal article" date="2006" name="Cell">
        <title>Structural basis for cooperativity in recruitment of MAML coactivators to Notch transcription complexes.</title>
        <authorList>
            <person name="Nam Y."/>
            <person name="Sliz P."/>
            <person name="Song L."/>
            <person name="Aster J.C."/>
            <person name="Blacklow S.C."/>
        </authorList>
    </citation>
    <scope>X-RAY CRYSTALLOGRAPHY (3.25 ANGSTROMS) OF 13-74 IN COMPLEX WITH RBPSUH AND NOTCH1</scope>
</reference>
<comment type="function">
    <text evidence="3 4 5 6 8">Acts as a transcriptional coactivator for NOTCH proteins. Has been shown to amplify NOTCH-induced transcription of HES1. Enhances phosphorylation and proteolytic turnover of the NOTCH intracellular domain in the nucleus through interaction with CDK8. Binds to CREBBP/CBP which promotes nucleosome acetylation at NOTCH enhancers and activates transcription. Induces phosphorylation and localization of CREBBP to nuclear foci. Plays a role in hematopoietic development by regulating NOTCH-mediated lymphoid cell fate decisions.</text>
</comment>
<comment type="subunit">
    <text evidence="1 3 4 5 6 7 8">Interacts (via N-terminus) with NOTCH1, NOTCH2, NOTCH3 and NOTCH4 (via ankyrin repeat region). Interacts (via N-terminus) with p53 (via DNA-binding region). Forms a DNA-binding complex with Notch proteins and RBPSUH/RBP-J kappa/CBF1. Also binds CREBBP/CBP and CDK8. Forms a complex with PRAG1, NOTCH1 and MAML1, in a MAML1-dependent manner (By similarity).</text>
</comment>
<comment type="interaction">
    <interactant intactId="EBI-908250">
        <id>Q92585</id>
    </interactant>
    <interactant intactId="EBI-636374">
        <id>P46531</id>
        <label>NOTCH1</label>
    </interactant>
    <organismsDiffer>false</organismsDiffer>
    <experiments>15</experiments>
</comment>
<comment type="subcellular location">
    <subcellularLocation>
        <location evidence="3">Nucleus speckle</location>
    </subcellularLocation>
    <text>Nuclear, in a punctate manner.</text>
</comment>
<comment type="tissue specificity">
    <text evidence="3">Widely expressed with highest levels in heart, pancreas, peripheral blood leukocytes and spleen.</text>
</comment>
<comment type="domain">
    <text evidence="3">The C-terminal region is required for transcriptional activation.</text>
</comment>
<comment type="similarity">
    <text evidence="10">Belongs to the mastermind family.</text>
</comment>
<comment type="sequence caution" evidence="10">
    <conflict type="erroneous initiation">
        <sequence resource="EMBL-CDS" id="BAA12114"/>
    </conflict>
</comment>
<protein>
    <recommendedName>
        <fullName>Mastermind-like protein 1</fullName>
        <shortName>Mam-1</shortName>
    </recommendedName>
</protein>
<organism>
    <name type="scientific">Homo sapiens</name>
    <name type="common">Human</name>
    <dbReference type="NCBI Taxonomy" id="9606"/>
    <lineage>
        <taxon>Eukaryota</taxon>
        <taxon>Metazoa</taxon>
        <taxon>Chordata</taxon>
        <taxon>Craniata</taxon>
        <taxon>Vertebrata</taxon>
        <taxon>Euteleostomi</taxon>
        <taxon>Mammalia</taxon>
        <taxon>Eutheria</taxon>
        <taxon>Euarchontoglires</taxon>
        <taxon>Primates</taxon>
        <taxon>Haplorrhini</taxon>
        <taxon>Catarrhini</taxon>
        <taxon>Hominidae</taxon>
        <taxon>Homo</taxon>
    </lineage>
</organism>
<accession>Q92585</accession>
<accession>Q9NZ12</accession>
<evidence type="ECO:0000250" key="1">
    <source>
        <dbReference type="UniProtKB" id="Q6T264"/>
    </source>
</evidence>
<evidence type="ECO:0000256" key="2">
    <source>
        <dbReference type="SAM" id="MobiDB-lite"/>
    </source>
</evidence>
<evidence type="ECO:0000269" key="3">
    <source>
    </source>
</evidence>
<evidence type="ECO:0000269" key="4">
    <source>
    </source>
</evidence>
<evidence type="ECO:0000269" key="5">
    <source>
    </source>
</evidence>
<evidence type="ECO:0000269" key="6">
    <source>
    </source>
</evidence>
<evidence type="ECO:0000269" key="7">
    <source>
    </source>
</evidence>
<evidence type="ECO:0000269" key="8">
    <source>
    </source>
</evidence>
<evidence type="ECO:0000269" key="9">
    <source>
    </source>
</evidence>
<evidence type="ECO:0000305" key="10"/>
<evidence type="ECO:0000312" key="11">
    <source>
        <dbReference type="EMBL" id="AAF34658.1"/>
    </source>
</evidence>
<evidence type="ECO:0000312" key="12">
    <source>
        <dbReference type="EMBL" id="BAA12114.2"/>
    </source>
</evidence>
<evidence type="ECO:0000312" key="13">
    <source>
        <dbReference type="HGNC" id="HGNC:13632"/>
    </source>
</evidence>
<evidence type="ECO:0007744" key="14">
    <source>
    </source>
</evidence>
<evidence type="ECO:0007744" key="15">
    <source>
    </source>
</evidence>
<evidence type="ECO:0007744" key="16">
    <source>
    </source>
</evidence>
<evidence type="ECO:0007829" key="17">
    <source>
        <dbReference type="PDB" id="2F8X"/>
    </source>
</evidence>
<evidence type="ECO:0007829" key="18">
    <source>
        <dbReference type="PDB" id="6SMV"/>
    </source>
</evidence>
<dbReference type="EMBL" id="D83785">
    <property type="protein sequence ID" value="BAA12114.2"/>
    <property type="status" value="ALT_INIT"/>
    <property type="molecule type" value="mRNA"/>
</dbReference>
<dbReference type="EMBL" id="AF221759">
    <property type="protein sequence ID" value="AAF34658.1"/>
    <property type="molecule type" value="mRNA"/>
</dbReference>
<dbReference type="CCDS" id="CCDS34315.1"/>
<dbReference type="RefSeq" id="NP_055572.1">
    <property type="nucleotide sequence ID" value="NM_014757.5"/>
</dbReference>
<dbReference type="PDB" id="2F8X">
    <property type="method" value="X-ray"/>
    <property type="resolution" value="3.25 A"/>
    <property type="chains" value="M=13-74"/>
</dbReference>
<dbReference type="PDB" id="3NBN">
    <property type="method" value="X-ray"/>
    <property type="resolution" value="3.45 A"/>
    <property type="chains" value="C/F=13-74"/>
</dbReference>
<dbReference type="PDB" id="3V79">
    <property type="method" value="X-ray"/>
    <property type="resolution" value="3.85 A"/>
    <property type="chains" value="M=13-74"/>
</dbReference>
<dbReference type="PDB" id="6SMV">
    <property type="method" value="X-ray"/>
    <property type="resolution" value="2.14 A"/>
    <property type="chains" value="A=1003-1016"/>
</dbReference>
<dbReference type="PDBsum" id="2F8X"/>
<dbReference type="PDBsum" id="3NBN"/>
<dbReference type="PDBsum" id="3V79"/>
<dbReference type="PDBsum" id="6SMV"/>
<dbReference type="SMR" id="Q92585"/>
<dbReference type="BioGRID" id="115138">
    <property type="interactions" value="79"/>
</dbReference>
<dbReference type="ComplexPortal" id="CPX-937">
    <property type="entry name" value="CSL-NOTCH1-MAML transcriptional activation complex"/>
</dbReference>
<dbReference type="CORUM" id="Q92585"/>
<dbReference type="DIP" id="DIP-29920N"/>
<dbReference type="FunCoup" id="Q92585">
    <property type="interactions" value="2346"/>
</dbReference>
<dbReference type="IntAct" id="Q92585">
    <property type="interactions" value="41"/>
</dbReference>
<dbReference type="MINT" id="Q92585"/>
<dbReference type="STRING" id="9606.ENSP00000292599"/>
<dbReference type="GlyCosmos" id="Q92585">
    <property type="glycosylation" value="1 site, 1 glycan"/>
</dbReference>
<dbReference type="GlyGen" id="Q92585">
    <property type="glycosylation" value="13 sites, 1 O-linked glycan (11 sites)"/>
</dbReference>
<dbReference type="iPTMnet" id="Q92585"/>
<dbReference type="PhosphoSitePlus" id="Q92585"/>
<dbReference type="BioMuta" id="MAML1"/>
<dbReference type="DMDM" id="68565602"/>
<dbReference type="jPOST" id="Q92585"/>
<dbReference type="MassIVE" id="Q92585"/>
<dbReference type="PaxDb" id="9606-ENSP00000292599"/>
<dbReference type="PeptideAtlas" id="Q92585"/>
<dbReference type="ProteomicsDB" id="75342"/>
<dbReference type="Pumba" id="Q92585"/>
<dbReference type="Antibodypedia" id="29514">
    <property type="antibodies" value="235 antibodies from 34 providers"/>
</dbReference>
<dbReference type="DNASU" id="9794"/>
<dbReference type="Ensembl" id="ENST00000292599.4">
    <property type="protein sequence ID" value="ENSP00000292599.3"/>
    <property type="gene ID" value="ENSG00000161021.13"/>
</dbReference>
<dbReference type="Ensembl" id="ENST00000638220.2">
    <property type="protein sequence ID" value="ENSP00000491444.1"/>
    <property type="gene ID" value="ENSG00000283780.3"/>
</dbReference>
<dbReference type="GeneID" id="9794"/>
<dbReference type="KEGG" id="hsa:9794"/>
<dbReference type="MANE-Select" id="ENST00000292599.4">
    <property type="protein sequence ID" value="ENSP00000292599.3"/>
    <property type="RefSeq nucleotide sequence ID" value="NM_014757.5"/>
    <property type="RefSeq protein sequence ID" value="NP_055572.1"/>
</dbReference>
<dbReference type="UCSC" id="uc003mkm.3">
    <property type="organism name" value="human"/>
</dbReference>
<dbReference type="AGR" id="HGNC:13632"/>
<dbReference type="CTD" id="9794"/>
<dbReference type="DisGeNET" id="9794"/>
<dbReference type="GeneCards" id="MAML1"/>
<dbReference type="HGNC" id="HGNC:13632">
    <property type="gene designation" value="MAML1"/>
</dbReference>
<dbReference type="HPA" id="ENSG00000161021">
    <property type="expression patterns" value="Low tissue specificity"/>
</dbReference>
<dbReference type="MalaCards" id="MAML1"/>
<dbReference type="MIM" id="605424">
    <property type="type" value="gene"/>
</dbReference>
<dbReference type="neXtProt" id="NX_Q92585"/>
<dbReference type="OpenTargets" id="ENSG00000161021"/>
<dbReference type="PharmGKB" id="PA30569"/>
<dbReference type="VEuPathDB" id="HostDB:ENSG00000161021"/>
<dbReference type="eggNOG" id="ENOG502QSU1">
    <property type="taxonomic scope" value="Eukaryota"/>
</dbReference>
<dbReference type="GeneTree" id="ENSGT00950000183201"/>
<dbReference type="HOGENOM" id="CLU_008569_1_0_1"/>
<dbReference type="InParanoid" id="Q92585"/>
<dbReference type="OMA" id="PCMITGT"/>
<dbReference type="OrthoDB" id="5982619at2759"/>
<dbReference type="PAN-GO" id="Q92585">
    <property type="GO annotations" value="3 GO annotations based on evolutionary models"/>
</dbReference>
<dbReference type="PhylomeDB" id="Q92585"/>
<dbReference type="TreeFam" id="TF332922"/>
<dbReference type="PathwayCommons" id="Q92585"/>
<dbReference type="Reactome" id="R-HSA-1912408">
    <property type="pathway name" value="Pre-NOTCH Transcription and Translation"/>
</dbReference>
<dbReference type="Reactome" id="R-HSA-210744">
    <property type="pathway name" value="Regulation of gene expression in late stage (branching morphogenesis) pancreatic bud precursor cells"/>
</dbReference>
<dbReference type="Reactome" id="R-HSA-2122947">
    <property type="pathway name" value="NOTCH1 Intracellular Domain Regulates Transcription"/>
</dbReference>
<dbReference type="Reactome" id="R-HSA-2197563">
    <property type="pathway name" value="NOTCH2 intracellular domain regulates transcription"/>
</dbReference>
<dbReference type="Reactome" id="R-HSA-2644606">
    <property type="pathway name" value="Constitutive Signaling by NOTCH1 PEST Domain Mutants"/>
</dbReference>
<dbReference type="Reactome" id="R-HSA-2894862">
    <property type="pathway name" value="Constitutive Signaling by NOTCH1 HD+PEST Domain Mutants"/>
</dbReference>
<dbReference type="Reactome" id="R-HSA-350054">
    <property type="pathway name" value="Notch-HLH transcription pathway"/>
</dbReference>
<dbReference type="Reactome" id="R-HSA-8941856">
    <property type="pathway name" value="RUNX3 regulates NOTCH signaling"/>
</dbReference>
<dbReference type="Reactome" id="R-HSA-9013508">
    <property type="pathway name" value="NOTCH3 Intracellular Domain Regulates Transcription"/>
</dbReference>
<dbReference type="Reactome" id="R-HSA-9013695">
    <property type="pathway name" value="NOTCH4 Intracellular Domain Regulates Transcription"/>
</dbReference>
<dbReference type="Reactome" id="R-HSA-9793380">
    <property type="pathway name" value="Formation of paraxial mesoderm"/>
</dbReference>
<dbReference type="SignaLink" id="Q92585"/>
<dbReference type="SIGNOR" id="Q92585"/>
<dbReference type="BioGRID-ORCS" id="9794">
    <property type="hits" value="31 hits in 1165 CRISPR screens"/>
</dbReference>
<dbReference type="CD-CODE" id="804901D1">
    <property type="entry name" value="Nuclear speckle"/>
</dbReference>
<dbReference type="ChiTaRS" id="MAML1">
    <property type="organism name" value="human"/>
</dbReference>
<dbReference type="EvolutionaryTrace" id="Q92585"/>
<dbReference type="GeneWiki" id="MAML1"/>
<dbReference type="GenomeRNAi" id="9794"/>
<dbReference type="Pharos" id="Q92585">
    <property type="development level" value="Tbio"/>
</dbReference>
<dbReference type="PRO" id="PR:Q92585"/>
<dbReference type="Proteomes" id="UP000005640">
    <property type="component" value="Chromosome 5"/>
</dbReference>
<dbReference type="RNAct" id="Q92585">
    <property type="molecule type" value="protein"/>
</dbReference>
<dbReference type="Bgee" id="ENSG00000161021">
    <property type="expression patterns" value="Expressed in sural nerve and 138 other cell types or tissues"/>
</dbReference>
<dbReference type="GO" id="GO:0002193">
    <property type="term" value="C:MAML1-RBP-Jkappa- ICN1 complex"/>
    <property type="evidence" value="ECO:0000314"/>
    <property type="project" value="UniProtKB"/>
</dbReference>
<dbReference type="GO" id="GO:0016607">
    <property type="term" value="C:nuclear speck"/>
    <property type="evidence" value="ECO:0007669"/>
    <property type="project" value="UniProtKB-SubCell"/>
</dbReference>
<dbReference type="GO" id="GO:0005654">
    <property type="term" value="C:nucleoplasm"/>
    <property type="evidence" value="ECO:0000318"/>
    <property type="project" value="GO_Central"/>
</dbReference>
<dbReference type="GO" id="GO:0005634">
    <property type="term" value="C:nucleus"/>
    <property type="evidence" value="ECO:0000314"/>
    <property type="project" value="UniProtKB"/>
</dbReference>
<dbReference type="GO" id="GO:0042605">
    <property type="term" value="F:peptide antigen binding"/>
    <property type="evidence" value="ECO:0000353"/>
    <property type="project" value="UniProtKB"/>
</dbReference>
<dbReference type="GO" id="GO:0019901">
    <property type="term" value="F:protein kinase binding"/>
    <property type="evidence" value="ECO:0000353"/>
    <property type="project" value="UniProtKB"/>
</dbReference>
<dbReference type="GO" id="GO:0003713">
    <property type="term" value="F:transcription coactivator activity"/>
    <property type="evidence" value="ECO:0000314"/>
    <property type="project" value="UniProtKB"/>
</dbReference>
<dbReference type="GO" id="GO:0060928">
    <property type="term" value="P:atrioventricular node cell development"/>
    <property type="evidence" value="ECO:0000250"/>
    <property type="project" value="BHF-UCL"/>
</dbReference>
<dbReference type="GO" id="GO:0003162">
    <property type="term" value="P:atrioventricular node development"/>
    <property type="evidence" value="ECO:0000250"/>
    <property type="project" value="BHF-UCL"/>
</dbReference>
<dbReference type="GO" id="GO:0045445">
    <property type="term" value="P:myoblast differentiation"/>
    <property type="evidence" value="ECO:0007669"/>
    <property type="project" value="Ensembl"/>
</dbReference>
<dbReference type="GO" id="GO:0007219">
    <property type="term" value="P:Notch signaling pathway"/>
    <property type="evidence" value="ECO:0000314"/>
    <property type="project" value="UniProtKB"/>
</dbReference>
<dbReference type="GO" id="GO:0010831">
    <property type="term" value="P:positive regulation of myotube differentiation"/>
    <property type="evidence" value="ECO:0000316"/>
    <property type="project" value="UniProtKB"/>
</dbReference>
<dbReference type="GO" id="GO:0045944">
    <property type="term" value="P:positive regulation of transcription by RNA polymerase II"/>
    <property type="evidence" value="ECO:0000314"/>
    <property type="project" value="UniProtKB"/>
</dbReference>
<dbReference type="GO" id="GO:0007221">
    <property type="term" value="P:positive regulation of transcription of Notch receptor target"/>
    <property type="evidence" value="ECO:0000318"/>
    <property type="project" value="GO_Central"/>
</dbReference>
<dbReference type="GO" id="GO:0006468">
    <property type="term" value="P:protein phosphorylation"/>
    <property type="evidence" value="ECO:0000314"/>
    <property type="project" value="UniProtKB"/>
</dbReference>
<dbReference type="Gene3D" id="6.10.250.970">
    <property type="match status" value="1"/>
</dbReference>
<dbReference type="IDEAL" id="IID00220"/>
<dbReference type="InterPro" id="IPR046369">
    <property type="entry name" value="MAML1-3"/>
</dbReference>
<dbReference type="InterPro" id="IPR048456">
    <property type="entry name" value="MAML1_3_TAD1"/>
</dbReference>
<dbReference type="InterPro" id="IPR048455">
    <property type="entry name" value="MAML1_3_TAD2"/>
</dbReference>
<dbReference type="InterPro" id="IPR046370">
    <property type="entry name" value="MAML_N_sf"/>
</dbReference>
<dbReference type="InterPro" id="IPR019082">
    <property type="entry name" value="Mastermind-like_N"/>
</dbReference>
<dbReference type="PANTHER" id="PTHR15692">
    <property type="entry name" value="MASTERMIND-LIKE"/>
    <property type="match status" value="1"/>
</dbReference>
<dbReference type="PANTHER" id="PTHR15692:SF19">
    <property type="entry name" value="MASTERMIND-LIKE PROTEIN 1"/>
    <property type="match status" value="1"/>
</dbReference>
<dbReference type="Pfam" id="PF09596">
    <property type="entry name" value="MamL-1"/>
    <property type="match status" value="1"/>
</dbReference>
<dbReference type="Pfam" id="PF20802">
    <property type="entry name" value="MAML1_3_TAD1"/>
    <property type="match status" value="1"/>
</dbReference>
<dbReference type="Pfam" id="PF20801">
    <property type="entry name" value="MAML1_3_TAD2"/>
    <property type="match status" value="1"/>
</dbReference>
<dbReference type="SMART" id="SM01275">
    <property type="entry name" value="MamL-1"/>
    <property type="match status" value="1"/>
</dbReference>
<feature type="chain" id="PRO_0000129493" description="Mastermind-like protein 1">
    <location>
        <begin position="1"/>
        <end position="1016"/>
    </location>
</feature>
<feature type="region of interest" description="Required for interaction with NOTCH proteins" evidence="3">
    <location>
        <begin position="1"/>
        <end position="123"/>
    </location>
</feature>
<feature type="region of interest" description="Disordered" evidence="2">
    <location>
        <begin position="65"/>
        <end position="184"/>
    </location>
</feature>
<feature type="region of interest" description="Disordered" evidence="2">
    <location>
        <begin position="263"/>
        <end position="487"/>
    </location>
</feature>
<feature type="region of interest" description="Disordered" evidence="2">
    <location>
        <begin position="561"/>
        <end position="617"/>
    </location>
</feature>
<feature type="region of interest" description="Disordered" evidence="2">
    <location>
        <begin position="658"/>
        <end position="681"/>
    </location>
</feature>
<feature type="region of interest" description="Disordered" evidence="2">
    <location>
        <begin position="796"/>
        <end position="953"/>
    </location>
</feature>
<feature type="compositionally biased region" description="Basic residues" evidence="2">
    <location>
        <begin position="67"/>
        <end position="76"/>
    </location>
</feature>
<feature type="compositionally biased region" description="Basic and acidic residues" evidence="2">
    <location>
        <begin position="93"/>
        <end position="115"/>
    </location>
</feature>
<feature type="compositionally biased region" description="Polar residues" evidence="2">
    <location>
        <begin position="116"/>
        <end position="129"/>
    </location>
</feature>
<feature type="compositionally biased region" description="Basic and acidic residues" evidence="2">
    <location>
        <begin position="263"/>
        <end position="282"/>
    </location>
</feature>
<feature type="compositionally biased region" description="Polar residues" evidence="2">
    <location>
        <begin position="283"/>
        <end position="292"/>
    </location>
</feature>
<feature type="compositionally biased region" description="Polar residues" evidence="2">
    <location>
        <begin position="322"/>
        <end position="353"/>
    </location>
</feature>
<feature type="compositionally biased region" description="Polar residues" evidence="2">
    <location>
        <begin position="392"/>
        <end position="403"/>
    </location>
</feature>
<feature type="compositionally biased region" description="Low complexity" evidence="2">
    <location>
        <begin position="413"/>
        <end position="426"/>
    </location>
</feature>
<feature type="compositionally biased region" description="Polar residues" evidence="2">
    <location>
        <begin position="427"/>
        <end position="439"/>
    </location>
</feature>
<feature type="compositionally biased region" description="Polar residues" evidence="2">
    <location>
        <begin position="451"/>
        <end position="463"/>
    </location>
</feature>
<feature type="compositionally biased region" description="Polar residues" evidence="2">
    <location>
        <begin position="577"/>
        <end position="595"/>
    </location>
</feature>
<feature type="compositionally biased region" description="Polar residues" evidence="2">
    <location>
        <begin position="602"/>
        <end position="617"/>
    </location>
</feature>
<feature type="compositionally biased region" description="Low complexity" evidence="2">
    <location>
        <begin position="801"/>
        <end position="810"/>
    </location>
</feature>
<feature type="compositionally biased region" description="Polar residues" evidence="2">
    <location>
        <begin position="834"/>
        <end position="885"/>
    </location>
</feature>
<feature type="modified residue" description="Phosphoserine" evidence="16">
    <location>
        <position position="45"/>
    </location>
</feature>
<feature type="modified residue" description="Phosphoserine" evidence="1">
    <location>
        <position position="120"/>
    </location>
</feature>
<feature type="modified residue" description="Phosphoserine" evidence="1">
    <location>
        <position position="303"/>
    </location>
</feature>
<feature type="modified residue" description="Phosphoserine" evidence="15 16">
    <location>
        <position position="314"/>
    </location>
</feature>
<feature type="modified residue" description="Phosphoserine" evidence="15 16">
    <location>
        <position position="360"/>
    </location>
</feature>
<feature type="modified residue" description="N6-acetyllysine" evidence="14">
    <location>
        <position position="822"/>
    </location>
</feature>
<feature type="modified residue" description="Phosphoserine" evidence="1">
    <location>
        <position position="1015"/>
    </location>
</feature>
<feature type="sequence variant" id="VAR_061335" description="In dbSNP:rs41285557.">
    <original>S</original>
    <variation>N</variation>
    <location>
        <position position="583"/>
    </location>
</feature>
<feature type="sequence variant" id="VAR_029010" description="In dbSNP:rs6895902." evidence="3">
    <original>S</original>
    <variation>N</variation>
    <location>
        <position position="1007"/>
    </location>
</feature>
<feature type="helix" evidence="17">
    <location>
        <begin position="17"/>
        <end position="69"/>
    </location>
</feature>
<feature type="helix" evidence="18">
    <location>
        <begin position="1003"/>
        <end position="1013"/>
    </location>
</feature>
<proteinExistence type="evidence at protein level"/>
<name>MAML1_HUMAN</name>
<gene>
    <name evidence="13" type="primary">MAML1</name>
    <name evidence="12" type="synonym">KIAA0200</name>
</gene>
<keyword id="KW-0002">3D-structure</keyword>
<keyword id="KW-0007">Acetylation</keyword>
<keyword id="KW-0010">Activator</keyword>
<keyword id="KW-0914">Notch signaling pathway</keyword>
<keyword id="KW-0539">Nucleus</keyword>
<keyword id="KW-0597">Phosphoprotein</keyword>
<keyword id="KW-1267">Proteomics identification</keyword>
<keyword id="KW-1185">Reference proteome</keyword>
<keyword id="KW-0804">Transcription</keyword>
<keyword id="KW-0805">Transcription regulation</keyword>
<sequence length="1016" mass="108054">MVLPTCPMAEFALPRHSAVMERLRRRIELCRRHHSTCEARYEAVSPERLELERQHTFALHQRCIQAKAKRAGKHRQPPAATAPAPAAPAPRLDAADGPEHGRPATHLHDTVKRNLDSATSPQNGDQQNGYGDLFPGHKKTRREAPLGVAISSNGLPPASPLGQSDKPSGADALQSSGKHSLGLDSLNKKRLADSSLHLNGGSNPSESFPLSLNKELKQEPVEDLPCMITGTVGSISQSNLMPDLNLNEQEWKELIEELNRSVPDEDMKDLFNEDFEEKKDPESSGSATQTPLAQDINIKTEFSPAAFEQEQLGSPQVRAGSAGQTFLGPSSAPVSTDSPSLGGSQTLFHTSGQPRADNPSPNLMPASAQAQNAQRALAGVVLPSQGPGGASELSSAHQLQQIAAKQKREQMLQNPQQATPAPAPGQMSTWQQTGPSHSSLDVPYPMEKPASPSSYKQDFTNSKLLMMPSVNKSSPRPGGPYLQPSHVNLLSHQPPSNLNQNSANNQGSVLDYGNTKPLSHYKADCGQGSPGSGQSKPALMAYLPQQLSHISHEQNSLFLMKPKPGNMPFRSLVPPGQEQNPSSVPVQAQATSVGTQPPAVSVASSHNSSPYLSSQQQAAVMKQHQLLLDQQKQREQQQKHLQQQQFLQRQQHLLAEQEKQQFQRHLTRPPPQYQDPTQGSFPQQVGQFTGSSAAVPGMNTLGPSNSSCPRVFPQAGNLMPMGPGHASVSSLPTNSGQQDRGVAQFPGSQNMPQSSLYGMASGITQIVAQPPPQATNGHAHIPRQTNVGQNTSVSAAYGQNSLGSSGLSQQHNKGTLNPGLTKPPVPRVSPAMGGQNSSWQHQGMPNLSGQTPGNSNVSPFTAASSFHMQQQAHLKMSSPQFSQAVPNRPMAPMSSAAAVGSLLPPVSAQQRTSAPAPAPPPTAPQQGLPGLSPAGPELGAFSQSPASQMGGRAGLHCTQAYPVRTAGQELPFAYSGQPGGSGLSSVAGHTDLIDSLLKNRTSEEWMSDLDDLLGSQ</sequence>